<evidence type="ECO:0000250" key="1"/>
<evidence type="ECO:0000305" key="2"/>
<reference key="1">
    <citation type="submission" date="2002-11" db="EMBL/GenBank/DDBJ databases">
        <title>Identification of complete keratin-associated protein (KAP) gene cluster spanning 800 kb region on human chromosome 21q22.11.</title>
        <authorList>
            <person name="Obayashi I."/>
            <person name="Shibuya K."/>
            <person name="Minoshima S."/>
            <person name="Kudoh J."/>
            <person name="Shimizu N."/>
        </authorList>
    </citation>
    <scope>NUCLEOTIDE SEQUENCE [MRNA]</scope>
    <source>
        <tissue>Hair root</tissue>
    </source>
</reference>
<comment type="function">
    <text>In the hair cortex, hair keratin intermediate filaments are embedded in an interfilamentous matrix, consisting of hair keratin-associated proteins (KRTAP), which are essential for the formation of a rigid and resistant hair shaft through their extensive disulfide bond cross-linking with abundant cysteine residues of hair keratins. The matrix proteins include the high-sulfur and high-glycine-tyrosine keratins.</text>
</comment>
<comment type="subunit">
    <text evidence="1">Interacts with hair keratins.</text>
</comment>
<comment type="similarity">
    <text evidence="2">Belongs to the KRTAP type 19 family.</text>
</comment>
<feature type="chain" id="PRO_0000307914" description="Keratin-associated protein 19-8">
    <location>
        <begin position="1"/>
        <end position="63"/>
    </location>
</feature>
<feature type="sequence variant" id="VAR_053476" description="In dbSNP:rs7279142.">
    <original>A</original>
    <variation>T</variation>
    <location>
        <position position="61"/>
    </location>
</feature>
<gene>
    <name type="primary">KRTAP19-8</name>
    <name type="synonym">KAP19.8</name>
</gene>
<accession>Q3LI54</accession>
<organism>
    <name type="scientific">Homo sapiens</name>
    <name type="common">Human</name>
    <dbReference type="NCBI Taxonomy" id="9606"/>
    <lineage>
        <taxon>Eukaryota</taxon>
        <taxon>Metazoa</taxon>
        <taxon>Chordata</taxon>
        <taxon>Craniata</taxon>
        <taxon>Vertebrata</taxon>
        <taxon>Euteleostomi</taxon>
        <taxon>Mammalia</taxon>
        <taxon>Eutheria</taxon>
        <taxon>Euarchontoglires</taxon>
        <taxon>Primates</taxon>
        <taxon>Haplorrhini</taxon>
        <taxon>Catarrhini</taxon>
        <taxon>Hominidae</taxon>
        <taxon>Homo</taxon>
    </lineage>
</organism>
<proteinExistence type="inferred from homology"/>
<keyword id="KW-0416">Keratin</keyword>
<keyword id="KW-1185">Reference proteome</keyword>
<keyword id="KW-0677">Repeat</keyword>
<dbReference type="EMBL" id="AB096964">
    <property type="protein sequence ID" value="BAE46379.1"/>
    <property type="molecule type" value="mRNA"/>
</dbReference>
<dbReference type="CCDS" id="CCDS42917.1"/>
<dbReference type="RefSeq" id="NP_001092689.1">
    <property type="nucleotide sequence ID" value="NM_001099219.1"/>
</dbReference>
<dbReference type="FunCoup" id="Q3LI54">
    <property type="interactions" value="6"/>
</dbReference>
<dbReference type="STRING" id="9606.ENSP00000372272"/>
<dbReference type="BioMuta" id="KRTAP19-8"/>
<dbReference type="DMDM" id="121942682"/>
<dbReference type="MassIVE" id="Q3LI54"/>
<dbReference type="PaxDb" id="9606-ENSP00000372272"/>
<dbReference type="DNASU" id="728299"/>
<dbReference type="Ensembl" id="ENST00000382822.2">
    <property type="protein sequence ID" value="ENSP00000372272.2"/>
    <property type="gene ID" value="ENSG00000206102.2"/>
</dbReference>
<dbReference type="GeneID" id="728299"/>
<dbReference type="KEGG" id="hsa:728299"/>
<dbReference type="MANE-Select" id="ENST00000382822.2">
    <property type="protein sequence ID" value="ENSP00000372272.2"/>
    <property type="RefSeq nucleotide sequence ID" value="NM_001099219.1"/>
    <property type="RefSeq protein sequence ID" value="NP_001092689.1"/>
</dbReference>
<dbReference type="UCSC" id="uc010glt.3">
    <property type="organism name" value="human"/>
</dbReference>
<dbReference type="AGR" id="HGNC:33898"/>
<dbReference type="CTD" id="728299"/>
<dbReference type="GeneCards" id="KRTAP19-8"/>
<dbReference type="HGNC" id="HGNC:33898">
    <property type="gene designation" value="KRTAP19-8"/>
</dbReference>
<dbReference type="HPA" id="ENSG00000206102">
    <property type="expression patterns" value="Not detected"/>
</dbReference>
<dbReference type="neXtProt" id="NX_Q3LI54"/>
<dbReference type="OpenTargets" id="ENSG00000206102"/>
<dbReference type="PharmGKB" id="PA162393748"/>
<dbReference type="VEuPathDB" id="HostDB:ENSG00000206102"/>
<dbReference type="eggNOG" id="ENOG502TDP7">
    <property type="taxonomic scope" value="Eukaryota"/>
</dbReference>
<dbReference type="GeneTree" id="ENSGT00950000183564"/>
<dbReference type="HOGENOM" id="CLU_184630_0_0_1"/>
<dbReference type="InParanoid" id="Q3LI54"/>
<dbReference type="OMA" id="MCHYSNY"/>
<dbReference type="PAN-GO" id="Q3LI54">
    <property type="GO annotations" value="0 GO annotations based on evolutionary models"/>
</dbReference>
<dbReference type="PathwayCommons" id="Q3LI54"/>
<dbReference type="Reactome" id="R-HSA-6805567">
    <property type="pathway name" value="Keratinization"/>
</dbReference>
<dbReference type="SignaLink" id="Q3LI54"/>
<dbReference type="BioGRID-ORCS" id="728299">
    <property type="hits" value="19 hits in 1100 CRISPR screens"/>
</dbReference>
<dbReference type="GenomeRNAi" id="728299"/>
<dbReference type="Pharos" id="Q3LI54">
    <property type="development level" value="Tdark"/>
</dbReference>
<dbReference type="PRO" id="PR:Q3LI54"/>
<dbReference type="Proteomes" id="UP000005640">
    <property type="component" value="Chromosome 21"/>
</dbReference>
<dbReference type="RNAct" id="Q3LI54">
    <property type="molecule type" value="protein"/>
</dbReference>
<dbReference type="Bgee" id="ENSG00000206102">
    <property type="expression patterns" value="Expressed in male germ line stem cell (sensu Vertebrata) in testis and 42 other cell types or tissues"/>
</dbReference>
<dbReference type="GO" id="GO:0005829">
    <property type="term" value="C:cytosol"/>
    <property type="evidence" value="ECO:0000304"/>
    <property type="project" value="Reactome"/>
</dbReference>
<dbReference type="GO" id="GO:0005882">
    <property type="term" value="C:intermediate filament"/>
    <property type="evidence" value="ECO:0007669"/>
    <property type="project" value="UniProtKB-KW"/>
</dbReference>
<dbReference type="InterPro" id="IPR021743">
    <property type="entry name" value="KRTAP_type8/19/20/21/22"/>
</dbReference>
<dbReference type="InterPro" id="IPR051528">
    <property type="entry name" value="KRTAP_type_19"/>
</dbReference>
<dbReference type="PANTHER" id="PTHR38140">
    <property type="entry name" value="KERATIN-ASSOCIATED PROTEIN 19-3-RELATED"/>
    <property type="match status" value="1"/>
</dbReference>
<dbReference type="PANTHER" id="PTHR38140:SF3">
    <property type="entry name" value="KERATIN-ASSOCIATED PROTEIN 19-8"/>
    <property type="match status" value="1"/>
</dbReference>
<dbReference type="Pfam" id="PF11759">
    <property type="entry name" value="KRTAP"/>
    <property type="match status" value="1"/>
</dbReference>
<sequence>MSYYRSYYGGLGYGYGGFGGWGYGYGCGYGSFRRLGYGCGYGGYGFSCCRPLYYGGYGFSAFY</sequence>
<protein>
    <recommendedName>
        <fullName>Keratin-associated protein 19-8</fullName>
    </recommendedName>
</protein>
<name>KR198_HUMAN</name>